<gene>
    <name type="primary">SNU71</name>
    <name type="ordered locus">KLLA0C18007g</name>
</gene>
<dbReference type="EMBL" id="CR382123">
    <property type="protein sequence ID" value="CAH01854.1"/>
    <property type="molecule type" value="Genomic_DNA"/>
</dbReference>
<dbReference type="RefSeq" id="XP_453003.1">
    <property type="nucleotide sequence ID" value="XM_453003.1"/>
</dbReference>
<dbReference type="SMR" id="Q6CST6"/>
<dbReference type="FunCoup" id="Q6CST6">
    <property type="interactions" value="195"/>
</dbReference>
<dbReference type="STRING" id="284590.Q6CST6"/>
<dbReference type="PaxDb" id="284590-Q6CST6"/>
<dbReference type="KEGG" id="kla:KLLA0_C18007g"/>
<dbReference type="eggNOG" id="KOG2253">
    <property type="taxonomic scope" value="Eukaryota"/>
</dbReference>
<dbReference type="HOGENOM" id="CLU_031562_0_0_1"/>
<dbReference type="InParanoid" id="Q6CST6"/>
<dbReference type="OMA" id="YDHHRSF"/>
<dbReference type="Proteomes" id="UP000000598">
    <property type="component" value="Chromosome C"/>
</dbReference>
<dbReference type="GO" id="GO:0005737">
    <property type="term" value="C:cytoplasm"/>
    <property type="evidence" value="ECO:0007669"/>
    <property type="project" value="UniProtKB-SubCell"/>
</dbReference>
<dbReference type="GO" id="GO:0005681">
    <property type="term" value="C:spliceosomal complex"/>
    <property type="evidence" value="ECO:0007669"/>
    <property type="project" value="UniProtKB-KW"/>
</dbReference>
<dbReference type="GO" id="GO:0003723">
    <property type="term" value="F:RNA binding"/>
    <property type="evidence" value="ECO:0007669"/>
    <property type="project" value="UniProtKB-KW"/>
</dbReference>
<dbReference type="GO" id="GO:0006397">
    <property type="term" value="P:mRNA processing"/>
    <property type="evidence" value="ECO:0007669"/>
    <property type="project" value="UniProtKB-KW"/>
</dbReference>
<dbReference type="GO" id="GO:0008380">
    <property type="term" value="P:RNA splicing"/>
    <property type="evidence" value="ECO:0007669"/>
    <property type="project" value="UniProtKB-KW"/>
</dbReference>
<dbReference type="Gene3D" id="1.20.1390.10">
    <property type="entry name" value="PWI domain"/>
    <property type="match status" value="1"/>
</dbReference>
<dbReference type="InterPro" id="IPR002483">
    <property type="entry name" value="PWI_dom"/>
</dbReference>
<dbReference type="Pfam" id="PF01480">
    <property type="entry name" value="PWI"/>
    <property type="match status" value="1"/>
</dbReference>
<dbReference type="Pfam" id="PF24826">
    <property type="entry name" value="SNU71_N"/>
    <property type="match status" value="1"/>
</dbReference>
<dbReference type="Pfam" id="PF24825">
    <property type="entry name" value="SNU71_RBD"/>
    <property type="match status" value="1"/>
</dbReference>
<dbReference type="SMART" id="SM00311">
    <property type="entry name" value="PWI"/>
    <property type="match status" value="1"/>
</dbReference>
<organism>
    <name type="scientific">Kluyveromyces lactis (strain ATCC 8585 / CBS 2359 / DSM 70799 / NBRC 1267 / NRRL Y-1140 / WM37)</name>
    <name type="common">Yeast</name>
    <name type="synonym">Candida sphaerica</name>
    <dbReference type="NCBI Taxonomy" id="284590"/>
    <lineage>
        <taxon>Eukaryota</taxon>
        <taxon>Fungi</taxon>
        <taxon>Dikarya</taxon>
        <taxon>Ascomycota</taxon>
        <taxon>Saccharomycotina</taxon>
        <taxon>Saccharomycetes</taxon>
        <taxon>Saccharomycetales</taxon>
        <taxon>Saccharomycetaceae</taxon>
        <taxon>Kluyveromyces</taxon>
    </lineage>
</organism>
<comment type="function">
    <text evidence="1">Component of the U1 snRNP particle, which recognizes and binds the 5'-splice site of pre-mRNA. Together with other non-snRNP factors, U1 snRNP forms the spliceosomal commitment complex, that targets pre-mRNA to the splicing pathway (By similarity).</text>
</comment>
<comment type="subunit">
    <text evidence="1">Component of the U1 snRNP particle, a subcomplex of the spliceosome.</text>
</comment>
<comment type="subcellular location">
    <subcellularLocation>
        <location evidence="1">Cytoplasm</location>
    </subcellularLocation>
    <subcellularLocation>
        <location evidence="1">Nucleus</location>
    </subcellularLocation>
</comment>
<comment type="similarity">
    <text evidence="4">Belongs to the SNU71 family.</text>
</comment>
<protein>
    <recommendedName>
        <fullName>U1 small nuclear ribonucleoprotein component SNU71</fullName>
    </recommendedName>
</protein>
<name>SNU71_KLULA</name>
<accession>Q6CST6</accession>
<sequence length="568" mass="64928">MDTVLFVSPTLYCCGDTKNWQSQVPKPGYVPILKSDIPKFEQSLKQANSHRDHDKGNSVASKTNETDNSDEFKTSTSRYVDLKSFLPISLEQQLHTVCLAHFPLGLGSKGIDKVMDRLDNLIRKKLQVEDNETKFIKQWSYVDCVNTLTVYISFQESIVEEYGKAIQLLEKLFDNGSDGIGLHMDENTRRFVCDLTEGSPAKELDETAKDEFSALITMLRSEPGSISQEKGLAGNSAVEYNVDISTLSDLPSSSLDQLCKDIVEFRTRVITLEKEKRNKELAEEEKRRKQNLKHIFDRIKVTNGGSEKGSAPEAESDSEDSDDEVEGYDDEDADDYEAEKKRVQAERDAQEAQYESMVHSFQDSLLVQYSSLRQEYQRLQNYETHLQKNKGPMLKELLHLAMDPYHDHHRPYKESESKADEEDRKRESEEVPKKKATETEPETELELELEPETETETKLVSDADATTAAPKIKLALKKSIGKTKNEIEEEETPETDAFQQKLNLLRESGVVEELVKEYLGVYEPDLVSYIFENIEEHQSKQALETELTETFDEDSPVLVSRIWEAMEQ</sequence>
<proteinExistence type="inferred from homology"/>
<keyword id="KW-0175">Coiled coil</keyword>
<keyword id="KW-0963">Cytoplasm</keyword>
<keyword id="KW-0507">mRNA processing</keyword>
<keyword id="KW-0508">mRNA splicing</keyword>
<keyword id="KW-0539">Nucleus</keyword>
<keyword id="KW-1185">Reference proteome</keyword>
<keyword id="KW-0687">Ribonucleoprotein</keyword>
<keyword id="KW-0694">RNA-binding</keyword>
<keyword id="KW-0747">Spliceosome</keyword>
<evidence type="ECO:0000250" key="1"/>
<evidence type="ECO:0000255" key="2"/>
<evidence type="ECO:0000256" key="3">
    <source>
        <dbReference type="SAM" id="MobiDB-lite"/>
    </source>
</evidence>
<evidence type="ECO:0000305" key="4"/>
<feature type="chain" id="PRO_0000333458" description="U1 small nuclear ribonucleoprotein component SNU71">
    <location>
        <begin position="1"/>
        <end position="568"/>
    </location>
</feature>
<feature type="region of interest" description="Disordered" evidence="3">
    <location>
        <begin position="43"/>
        <end position="71"/>
    </location>
</feature>
<feature type="region of interest" description="Disordered" evidence="3">
    <location>
        <begin position="299"/>
        <end position="335"/>
    </location>
</feature>
<feature type="region of interest" description="Disordered" evidence="3">
    <location>
        <begin position="407"/>
        <end position="464"/>
    </location>
</feature>
<feature type="coiled-coil region" evidence="2">
    <location>
        <begin position="260"/>
        <end position="359"/>
    </location>
</feature>
<feature type="compositionally biased region" description="Acidic residues" evidence="3">
    <location>
        <begin position="314"/>
        <end position="335"/>
    </location>
</feature>
<feature type="compositionally biased region" description="Basic and acidic residues" evidence="3">
    <location>
        <begin position="412"/>
        <end position="438"/>
    </location>
</feature>
<feature type="compositionally biased region" description="Acidic residues" evidence="3">
    <location>
        <begin position="439"/>
        <end position="454"/>
    </location>
</feature>
<reference key="1">
    <citation type="journal article" date="2004" name="Nature">
        <title>Genome evolution in yeasts.</title>
        <authorList>
            <person name="Dujon B."/>
            <person name="Sherman D."/>
            <person name="Fischer G."/>
            <person name="Durrens P."/>
            <person name="Casaregola S."/>
            <person name="Lafontaine I."/>
            <person name="de Montigny J."/>
            <person name="Marck C."/>
            <person name="Neuveglise C."/>
            <person name="Talla E."/>
            <person name="Goffard N."/>
            <person name="Frangeul L."/>
            <person name="Aigle M."/>
            <person name="Anthouard V."/>
            <person name="Babour A."/>
            <person name="Barbe V."/>
            <person name="Barnay S."/>
            <person name="Blanchin S."/>
            <person name="Beckerich J.-M."/>
            <person name="Beyne E."/>
            <person name="Bleykasten C."/>
            <person name="Boisrame A."/>
            <person name="Boyer J."/>
            <person name="Cattolico L."/>
            <person name="Confanioleri F."/>
            <person name="de Daruvar A."/>
            <person name="Despons L."/>
            <person name="Fabre E."/>
            <person name="Fairhead C."/>
            <person name="Ferry-Dumazet H."/>
            <person name="Groppi A."/>
            <person name="Hantraye F."/>
            <person name="Hennequin C."/>
            <person name="Jauniaux N."/>
            <person name="Joyet P."/>
            <person name="Kachouri R."/>
            <person name="Kerrest A."/>
            <person name="Koszul R."/>
            <person name="Lemaire M."/>
            <person name="Lesur I."/>
            <person name="Ma L."/>
            <person name="Muller H."/>
            <person name="Nicaud J.-M."/>
            <person name="Nikolski M."/>
            <person name="Oztas S."/>
            <person name="Ozier-Kalogeropoulos O."/>
            <person name="Pellenz S."/>
            <person name="Potier S."/>
            <person name="Richard G.-F."/>
            <person name="Straub M.-L."/>
            <person name="Suleau A."/>
            <person name="Swennen D."/>
            <person name="Tekaia F."/>
            <person name="Wesolowski-Louvel M."/>
            <person name="Westhof E."/>
            <person name="Wirth B."/>
            <person name="Zeniou-Meyer M."/>
            <person name="Zivanovic Y."/>
            <person name="Bolotin-Fukuhara M."/>
            <person name="Thierry A."/>
            <person name="Bouchier C."/>
            <person name="Caudron B."/>
            <person name="Scarpelli C."/>
            <person name="Gaillardin C."/>
            <person name="Weissenbach J."/>
            <person name="Wincker P."/>
            <person name="Souciet J.-L."/>
        </authorList>
    </citation>
    <scope>NUCLEOTIDE SEQUENCE [LARGE SCALE GENOMIC DNA]</scope>
    <source>
        <strain>ATCC 8585 / CBS 2359 / DSM 70799 / NBRC 1267 / NRRL Y-1140 / WM37</strain>
    </source>
</reference>